<comment type="function">
    <text>May play an immunoevasive role in the pathogenesis of Marek's disease. It is a candidate for causing the early-stage immunosuppression that occurs after MDHV infection.</text>
</comment>
<comment type="subcellular location">
    <subcellularLocation>
        <location>Secreted</location>
    </subcellularLocation>
    <subcellularLocation>
        <location>Host cell membrane</location>
        <topology>Single-pass membrane protein</topology>
    </subcellularLocation>
    <text>Predominantly secreted. Secreted, but a small amount of mature GP57-65 is anchored in the plasma membrane or held by other interactions.</text>
</comment>
<comment type="similarity">
    <text evidence="3">Belongs to the herpesviridae glycoprotein C family.</text>
</comment>
<gene>
    <name type="primary">gC</name>
    <name type="ORF">GA</name>
</gene>
<feature type="signal peptide" evidence="1">
    <location>
        <begin position="1"/>
        <end position="27"/>
    </location>
</feature>
<feature type="chain" id="PRO_0000038207" description="Envelope glycoprotein C homolog">
    <location>
        <begin position="28"/>
        <end position="501"/>
    </location>
</feature>
<feature type="topological domain" description="Virion surface" evidence="1">
    <location>
        <begin position="28"/>
        <end position="465"/>
    </location>
</feature>
<feature type="transmembrane region" description="Helical" evidence="1">
    <location>
        <begin position="466"/>
        <end position="492"/>
    </location>
</feature>
<feature type="topological domain" description="Cytoplasmic" evidence="1">
    <location>
        <begin position="493"/>
        <end position="501"/>
    </location>
</feature>
<feature type="domain" description="Ig-like">
    <location>
        <begin position="258"/>
        <end position="356"/>
    </location>
</feature>
<feature type="region of interest" description="Disordered" evidence="2">
    <location>
        <begin position="53"/>
        <end position="87"/>
    </location>
</feature>
<feature type="compositionally biased region" description="Low complexity" evidence="2">
    <location>
        <begin position="62"/>
        <end position="72"/>
    </location>
</feature>
<feature type="glycosylation site" description="N-linked (GlcNAc...) asparagine; by host" evidence="1">
    <location>
        <position position="46"/>
    </location>
</feature>
<feature type="glycosylation site" description="N-linked (GlcNAc...) asparagine; by host" evidence="1">
    <location>
        <position position="91"/>
    </location>
</feature>
<feature type="glycosylation site" description="N-linked (GlcNAc...) asparagine; by host" evidence="1">
    <location>
        <position position="100"/>
    </location>
</feature>
<feature type="glycosylation site" description="N-linked (GlcNAc...) asparagine; by host" evidence="1">
    <location>
        <position position="120"/>
    </location>
</feature>
<feature type="glycosylation site" description="N-linked (GlcNAc...) asparagine; by host" evidence="1">
    <location>
        <position position="212"/>
    </location>
</feature>
<feature type="glycosylation site" description="N-linked (GlcNAc...) asparagine; by host" evidence="1">
    <location>
        <position position="354"/>
    </location>
</feature>
<feature type="glycosylation site" description="N-linked (GlcNAc...) asparagine; by host" evidence="1">
    <location>
        <position position="400"/>
    </location>
</feature>
<feature type="glycosylation site" description="N-linked (GlcNAc...) asparagine; by host" evidence="1">
    <location>
        <position position="429"/>
    </location>
</feature>
<evidence type="ECO:0000255" key="1"/>
<evidence type="ECO:0000256" key="2">
    <source>
        <dbReference type="SAM" id="MobiDB-lite"/>
    </source>
</evidence>
<evidence type="ECO:0000305" key="3"/>
<accession>P22650</accession>
<keyword id="KW-0325">Glycoprotein</keyword>
<keyword id="KW-1032">Host cell membrane</keyword>
<keyword id="KW-1043">Host membrane</keyword>
<keyword id="KW-0945">Host-virus interaction</keyword>
<keyword id="KW-0393">Immunoglobulin domain</keyword>
<keyword id="KW-0472">Membrane</keyword>
<keyword id="KW-0964">Secreted</keyword>
<keyword id="KW-0732">Signal</keyword>
<keyword id="KW-0812">Transmembrane</keyword>
<keyword id="KW-1133">Transmembrane helix</keyword>
<dbReference type="EMBL" id="D90002">
    <property type="protein sequence ID" value="BAA14054.1"/>
    <property type="status" value="ALT_SEQ"/>
    <property type="molecule type" value="Genomic_DNA"/>
</dbReference>
<dbReference type="GlyCosmos" id="P22650">
    <property type="glycosylation" value="8 sites, No reported glycans"/>
</dbReference>
<dbReference type="GO" id="GO:0005576">
    <property type="term" value="C:extracellular region"/>
    <property type="evidence" value="ECO:0007669"/>
    <property type="project" value="UniProtKB-SubCell"/>
</dbReference>
<dbReference type="GO" id="GO:0020002">
    <property type="term" value="C:host cell plasma membrane"/>
    <property type="evidence" value="ECO:0007669"/>
    <property type="project" value="UniProtKB-SubCell"/>
</dbReference>
<dbReference type="GO" id="GO:0016020">
    <property type="term" value="C:membrane"/>
    <property type="evidence" value="ECO:0007669"/>
    <property type="project" value="UniProtKB-KW"/>
</dbReference>
<dbReference type="InterPro" id="IPR001038">
    <property type="entry name" value="GA_GC"/>
</dbReference>
<dbReference type="InterPro" id="IPR007110">
    <property type="entry name" value="Ig-like_dom"/>
</dbReference>
<dbReference type="InterPro" id="IPR036179">
    <property type="entry name" value="Ig-like_dom_sf"/>
</dbReference>
<dbReference type="InterPro" id="IPR001654">
    <property type="entry name" value="Marek_A"/>
</dbReference>
<dbReference type="Pfam" id="PF02124">
    <property type="entry name" value="Marek_A"/>
    <property type="match status" value="1"/>
</dbReference>
<dbReference type="PRINTS" id="PR00675">
    <property type="entry name" value="MAREKSGPA"/>
</dbReference>
<dbReference type="SUPFAM" id="SSF48726">
    <property type="entry name" value="Immunoglobulin"/>
    <property type="match status" value="1"/>
</dbReference>
<dbReference type="PROSITE" id="PS50835">
    <property type="entry name" value="IG_LIKE"/>
    <property type="match status" value="1"/>
</dbReference>
<name>GC_GAHVB</name>
<organismHost>
    <name type="scientific">Gallus gallus</name>
    <name type="common">Chicken</name>
    <dbReference type="NCBI Taxonomy" id="9031"/>
</organismHost>
<proteinExistence type="inferred from homology"/>
<protein>
    <recommendedName>
        <fullName>Envelope glycoprotein C homolog</fullName>
    </recommendedName>
    <alternativeName>
        <fullName>A antigen</fullName>
    </alternativeName>
    <alternativeName>
        <fullName>Glycoprotein A</fullName>
        <shortName>GA</shortName>
    </alternativeName>
    <alternativeName>
        <fullName>Secretory glycoprotein GP57-65</fullName>
    </alternativeName>
</protein>
<sequence length="501" mass="56135">MLTPRVLRALGWTGLFFLLLSPSNVLGASLSRDLETPPFLSFDPSNISINGAPLTEVPHAPSTESVSTNSESTNEHTITETTGKNAYIHNNASTDKQNANDTHKMPNILCDTEEVFVFLNETGRFVCTLKVDPPSDSEWSNFVLDLIFNPIEYHANEKNVEAARIAGLYGVPGSDYAYPRQSELISSIRRDPQGTFWTSPSPHGNKYFIWINKTTNTMGVEIRNVDYADNGYMQVIMRDHFNRPLIDKHIYIRVCQRPASVDVLAPPVLSGENYKASCIVRHFYPPGSVYVSWRQNGNIATPRKDRDGSFWWFESGRGATLVSTITLGNSGIDFPPKISCLVAWKQGDMISTTNATAIPTVYHHPRLSLAFKDGYAICTIECVPSEITVRWLVHDEAQPNTTYNTVVTGLCRTIDRHRNLLSRIPVWDNWTKTKYTCRLIGYPFDEDKFQDSEYYDATPSARGTPMVITVTAVLGLAVILGMGIIMTALCLYNSTRKNIRL</sequence>
<organism>
    <name type="scientific">Gallid herpesvirus 2 (strain bc-1)</name>
    <name type="common">GaHV-2</name>
    <name type="synonym">Marek's disease herpesvirus type 1</name>
    <dbReference type="NCBI Taxonomy" id="10387"/>
    <lineage>
        <taxon>Viruses</taxon>
        <taxon>Duplodnaviria</taxon>
        <taxon>Heunggongvirae</taxon>
        <taxon>Peploviricota</taxon>
        <taxon>Herviviricetes</taxon>
        <taxon>Herpesvirales</taxon>
        <taxon>Orthoherpesviridae</taxon>
        <taxon>Alphaherpesvirinae</taxon>
        <taxon>Mardivirus</taxon>
        <taxon>Mardivirus gallidalpha2</taxon>
        <taxon>Gallid alphaherpesvirus 2</taxon>
    </lineage>
</organism>
<reference key="1">
    <citation type="journal article" date="1989" name="Virus Genes">
        <title>Comparison of the sequence of the secretory glycoprotein A (gA) gene in Md5 and BC-1 strains of Marek's disease virus type 1.</title>
        <authorList>
            <person name="Ihara T."/>
            <person name="Kato A."/>
            <person name="Ueda S."/>
            <person name="Ishihama A."/>
            <person name="Hirai K."/>
        </authorList>
    </citation>
    <scope>NUCLEOTIDE SEQUENCE [GENOMIC DNA]</scope>
</reference>